<reference key="1">
    <citation type="journal article" date="2006" name="Proc. Natl. Acad. Sci. U.S.A.">
        <title>The complete genome sequence of a chronic atrophic gastritis Helicobacter pylori strain: evolution during disease progression.</title>
        <authorList>
            <person name="Oh J.D."/>
            <person name="Kling-Baeckhed H."/>
            <person name="Giannakis M."/>
            <person name="Xu J."/>
            <person name="Fulton R.S."/>
            <person name="Fulton L.A."/>
            <person name="Cordum H.S."/>
            <person name="Wang C."/>
            <person name="Elliott G."/>
            <person name="Edwards J."/>
            <person name="Mardis E.R."/>
            <person name="Engstrand L.G."/>
            <person name="Gordon J.I."/>
        </authorList>
    </citation>
    <scope>NUCLEOTIDE SEQUENCE [LARGE SCALE GENOMIC DNA]</scope>
    <source>
        <strain>HPAG1</strain>
    </source>
</reference>
<sequence>MARKTPLNRIRNIGIAAHIDAGKTTTSERILFYTGVSHKIGEVHDGAATMDWMEQEKERGITITSAATTCFWKDHQINLIDTPGHVDFTIEVERSMRVLDGAVSVFCSVGGVQPQSETVWRQANKYGVPRIVFVNKMDRIGANFYNVENQIKLRLKANPVPINIPIGAEDTFIGVIDLVQMKAIVWNNETMGSKYDVEEIPSDLLEKAKQYREKLVEAVAEQDEALMEKYLGGEELSVEEIKKGIKTGCLNMSLVPMLCGSSFKNKGVQTLLDAVIDYLPAPTEVVDIKGIDPKTEEEVFVKSSDDGEFAGLAFKIMTDPFVGQLTFVRVYRGKLESGSYVYNSTKDKKERVGRLLKMHSNKREDIKEVYAGEICAFVGLKDTLTGDTLCDEKNAVVLERMEFPEPVIHIAVEPKTKADQEKMGVALGKLAEEDPSFRVMTQEETGQTLIGGMGELHLEIIVDRLKREFKVEAEIGQPQVAFRETIRSSVSKEHKYAKQSGGRGQYGHVFIKLEPKEPGSGYEFVNEISGGVIPKEYIPAVDKGIQEAMQNGVLAGYPVVDFKVTLYDGSYHDVDSSEMAFKIAGSMAFKEASRAANPVLLEPMMKVEVEVPEEYMGDVIGDLNRRRGQINSMDDRLGLKIVNAFVPLVEMFGYSTDLRSATQGRGTYSMEFDHYGEVPSNIAKEIVEKRKG</sequence>
<evidence type="ECO:0000255" key="1">
    <source>
        <dbReference type="HAMAP-Rule" id="MF_00054"/>
    </source>
</evidence>
<gene>
    <name evidence="1" type="primary">fusA</name>
    <name type="ordered locus">HPAG1_1134</name>
</gene>
<keyword id="KW-0963">Cytoplasm</keyword>
<keyword id="KW-0251">Elongation factor</keyword>
<keyword id="KW-0342">GTP-binding</keyword>
<keyword id="KW-0547">Nucleotide-binding</keyword>
<keyword id="KW-0648">Protein biosynthesis</keyword>
<feature type="chain" id="PRO_0000263460" description="Elongation factor G">
    <location>
        <begin position="1"/>
        <end position="692"/>
    </location>
</feature>
<feature type="domain" description="tr-type G">
    <location>
        <begin position="8"/>
        <end position="283"/>
    </location>
</feature>
<feature type="binding site" evidence="1">
    <location>
        <begin position="17"/>
        <end position="24"/>
    </location>
    <ligand>
        <name>GTP</name>
        <dbReference type="ChEBI" id="CHEBI:37565"/>
    </ligand>
</feature>
<feature type="binding site" evidence="1">
    <location>
        <begin position="81"/>
        <end position="85"/>
    </location>
    <ligand>
        <name>GTP</name>
        <dbReference type="ChEBI" id="CHEBI:37565"/>
    </ligand>
</feature>
<feature type="binding site" evidence="1">
    <location>
        <begin position="135"/>
        <end position="138"/>
    </location>
    <ligand>
        <name>GTP</name>
        <dbReference type="ChEBI" id="CHEBI:37565"/>
    </ligand>
</feature>
<dbReference type="EMBL" id="CP000241">
    <property type="protein sequence ID" value="ABF85201.1"/>
    <property type="molecule type" value="Genomic_DNA"/>
</dbReference>
<dbReference type="RefSeq" id="WP_000101846.1">
    <property type="nucleotide sequence ID" value="NC_008086.1"/>
</dbReference>
<dbReference type="SMR" id="Q1CS71"/>
<dbReference type="KEGG" id="hpa:HPAG1_1134"/>
<dbReference type="HOGENOM" id="CLU_002794_4_1_7"/>
<dbReference type="GO" id="GO:0005737">
    <property type="term" value="C:cytoplasm"/>
    <property type="evidence" value="ECO:0007669"/>
    <property type="project" value="UniProtKB-SubCell"/>
</dbReference>
<dbReference type="GO" id="GO:0005525">
    <property type="term" value="F:GTP binding"/>
    <property type="evidence" value="ECO:0007669"/>
    <property type="project" value="UniProtKB-UniRule"/>
</dbReference>
<dbReference type="GO" id="GO:0003924">
    <property type="term" value="F:GTPase activity"/>
    <property type="evidence" value="ECO:0007669"/>
    <property type="project" value="InterPro"/>
</dbReference>
<dbReference type="GO" id="GO:0003746">
    <property type="term" value="F:translation elongation factor activity"/>
    <property type="evidence" value="ECO:0007669"/>
    <property type="project" value="UniProtKB-UniRule"/>
</dbReference>
<dbReference type="GO" id="GO:0032790">
    <property type="term" value="P:ribosome disassembly"/>
    <property type="evidence" value="ECO:0007669"/>
    <property type="project" value="TreeGrafter"/>
</dbReference>
<dbReference type="CDD" id="cd01886">
    <property type="entry name" value="EF-G"/>
    <property type="match status" value="1"/>
</dbReference>
<dbReference type="CDD" id="cd16262">
    <property type="entry name" value="EFG_III"/>
    <property type="match status" value="1"/>
</dbReference>
<dbReference type="CDD" id="cd01434">
    <property type="entry name" value="EFG_mtEFG1_IV"/>
    <property type="match status" value="1"/>
</dbReference>
<dbReference type="CDD" id="cd03713">
    <property type="entry name" value="EFG_mtEFG_C"/>
    <property type="match status" value="1"/>
</dbReference>
<dbReference type="CDD" id="cd04088">
    <property type="entry name" value="EFG_mtEFG_II"/>
    <property type="match status" value="1"/>
</dbReference>
<dbReference type="FunFam" id="2.40.30.10:FF:000006">
    <property type="entry name" value="Elongation factor G"/>
    <property type="match status" value="1"/>
</dbReference>
<dbReference type="FunFam" id="3.30.230.10:FF:000003">
    <property type="entry name" value="Elongation factor G"/>
    <property type="match status" value="1"/>
</dbReference>
<dbReference type="FunFam" id="3.30.70.240:FF:000001">
    <property type="entry name" value="Elongation factor G"/>
    <property type="match status" value="1"/>
</dbReference>
<dbReference type="FunFam" id="3.30.70.870:FF:000001">
    <property type="entry name" value="Elongation factor G"/>
    <property type="match status" value="1"/>
</dbReference>
<dbReference type="FunFam" id="3.40.50.300:FF:000029">
    <property type="entry name" value="Elongation factor G"/>
    <property type="match status" value="1"/>
</dbReference>
<dbReference type="Gene3D" id="3.30.230.10">
    <property type="match status" value="1"/>
</dbReference>
<dbReference type="Gene3D" id="3.30.70.240">
    <property type="match status" value="1"/>
</dbReference>
<dbReference type="Gene3D" id="3.30.70.870">
    <property type="entry name" value="Elongation Factor G (Translational Gtpase), domain 3"/>
    <property type="match status" value="1"/>
</dbReference>
<dbReference type="Gene3D" id="3.40.50.300">
    <property type="entry name" value="P-loop containing nucleotide triphosphate hydrolases"/>
    <property type="match status" value="1"/>
</dbReference>
<dbReference type="Gene3D" id="2.40.30.10">
    <property type="entry name" value="Translation factors"/>
    <property type="match status" value="1"/>
</dbReference>
<dbReference type="HAMAP" id="MF_00054_B">
    <property type="entry name" value="EF_G_EF_2_B"/>
    <property type="match status" value="1"/>
</dbReference>
<dbReference type="InterPro" id="IPR041095">
    <property type="entry name" value="EFG_II"/>
</dbReference>
<dbReference type="InterPro" id="IPR009022">
    <property type="entry name" value="EFG_III"/>
</dbReference>
<dbReference type="InterPro" id="IPR035647">
    <property type="entry name" value="EFG_III/V"/>
</dbReference>
<dbReference type="InterPro" id="IPR047872">
    <property type="entry name" value="EFG_IV"/>
</dbReference>
<dbReference type="InterPro" id="IPR035649">
    <property type="entry name" value="EFG_V"/>
</dbReference>
<dbReference type="InterPro" id="IPR000640">
    <property type="entry name" value="EFG_V-like"/>
</dbReference>
<dbReference type="InterPro" id="IPR004161">
    <property type="entry name" value="EFTu-like_2"/>
</dbReference>
<dbReference type="InterPro" id="IPR031157">
    <property type="entry name" value="G_TR_CS"/>
</dbReference>
<dbReference type="InterPro" id="IPR027417">
    <property type="entry name" value="P-loop_NTPase"/>
</dbReference>
<dbReference type="InterPro" id="IPR020568">
    <property type="entry name" value="Ribosomal_Su5_D2-typ_SF"/>
</dbReference>
<dbReference type="InterPro" id="IPR014721">
    <property type="entry name" value="Ribsml_uS5_D2-typ_fold_subgr"/>
</dbReference>
<dbReference type="InterPro" id="IPR005225">
    <property type="entry name" value="Small_GTP-bd"/>
</dbReference>
<dbReference type="InterPro" id="IPR000795">
    <property type="entry name" value="T_Tr_GTP-bd_dom"/>
</dbReference>
<dbReference type="InterPro" id="IPR009000">
    <property type="entry name" value="Transl_B-barrel_sf"/>
</dbReference>
<dbReference type="InterPro" id="IPR004540">
    <property type="entry name" value="Transl_elong_EFG/EF2"/>
</dbReference>
<dbReference type="InterPro" id="IPR005517">
    <property type="entry name" value="Transl_elong_EFG/EF2_IV"/>
</dbReference>
<dbReference type="NCBIfam" id="TIGR00484">
    <property type="entry name" value="EF-G"/>
    <property type="match status" value="1"/>
</dbReference>
<dbReference type="NCBIfam" id="NF009379">
    <property type="entry name" value="PRK12740.1-3"/>
    <property type="match status" value="1"/>
</dbReference>
<dbReference type="NCBIfam" id="NF009381">
    <property type="entry name" value="PRK12740.1-5"/>
    <property type="match status" value="1"/>
</dbReference>
<dbReference type="NCBIfam" id="TIGR00231">
    <property type="entry name" value="small_GTP"/>
    <property type="match status" value="1"/>
</dbReference>
<dbReference type="PANTHER" id="PTHR43261:SF1">
    <property type="entry name" value="RIBOSOME-RELEASING FACTOR 2, MITOCHONDRIAL"/>
    <property type="match status" value="1"/>
</dbReference>
<dbReference type="PANTHER" id="PTHR43261">
    <property type="entry name" value="TRANSLATION ELONGATION FACTOR G-RELATED"/>
    <property type="match status" value="1"/>
</dbReference>
<dbReference type="Pfam" id="PF00679">
    <property type="entry name" value="EFG_C"/>
    <property type="match status" value="1"/>
</dbReference>
<dbReference type="Pfam" id="PF14492">
    <property type="entry name" value="EFG_III"/>
    <property type="match status" value="1"/>
</dbReference>
<dbReference type="Pfam" id="PF03764">
    <property type="entry name" value="EFG_IV"/>
    <property type="match status" value="1"/>
</dbReference>
<dbReference type="Pfam" id="PF00009">
    <property type="entry name" value="GTP_EFTU"/>
    <property type="match status" value="1"/>
</dbReference>
<dbReference type="Pfam" id="PF03144">
    <property type="entry name" value="GTP_EFTU_D2"/>
    <property type="match status" value="1"/>
</dbReference>
<dbReference type="PRINTS" id="PR00315">
    <property type="entry name" value="ELONGATNFCT"/>
</dbReference>
<dbReference type="SMART" id="SM00838">
    <property type="entry name" value="EFG_C"/>
    <property type="match status" value="1"/>
</dbReference>
<dbReference type="SMART" id="SM00889">
    <property type="entry name" value="EFG_IV"/>
    <property type="match status" value="1"/>
</dbReference>
<dbReference type="SUPFAM" id="SSF54980">
    <property type="entry name" value="EF-G C-terminal domain-like"/>
    <property type="match status" value="2"/>
</dbReference>
<dbReference type="SUPFAM" id="SSF52540">
    <property type="entry name" value="P-loop containing nucleoside triphosphate hydrolases"/>
    <property type="match status" value="1"/>
</dbReference>
<dbReference type="SUPFAM" id="SSF54211">
    <property type="entry name" value="Ribosomal protein S5 domain 2-like"/>
    <property type="match status" value="1"/>
</dbReference>
<dbReference type="SUPFAM" id="SSF50447">
    <property type="entry name" value="Translation proteins"/>
    <property type="match status" value="1"/>
</dbReference>
<dbReference type="PROSITE" id="PS00301">
    <property type="entry name" value="G_TR_1"/>
    <property type="match status" value="1"/>
</dbReference>
<dbReference type="PROSITE" id="PS51722">
    <property type="entry name" value="G_TR_2"/>
    <property type="match status" value="1"/>
</dbReference>
<protein>
    <recommendedName>
        <fullName evidence="1">Elongation factor G</fullName>
        <shortName evidence="1">EF-G</shortName>
    </recommendedName>
</protein>
<comment type="function">
    <text evidence="1">Catalyzes the GTP-dependent ribosomal translocation step during translation elongation. During this step, the ribosome changes from the pre-translocational (PRE) to the post-translocational (POST) state as the newly formed A-site-bound peptidyl-tRNA and P-site-bound deacylated tRNA move to the P and E sites, respectively. Catalyzes the coordinated movement of the two tRNA molecules, the mRNA and conformational changes in the ribosome.</text>
</comment>
<comment type="subcellular location">
    <subcellularLocation>
        <location evidence="1">Cytoplasm</location>
    </subcellularLocation>
</comment>
<comment type="similarity">
    <text evidence="1">Belongs to the TRAFAC class translation factor GTPase superfamily. Classic translation factor GTPase family. EF-G/EF-2 subfamily.</text>
</comment>
<accession>Q1CS71</accession>
<proteinExistence type="inferred from homology"/>
<name>EFG_HELPH</name>
<organism>
    <name type="scientific">Helicobacter pylori (strain HPAG1)</name>
    <dbReference type="NCBI Taxonomy" id="357544"/>
    <lineage>
        <taxon>Bacteria</taxon>
        <taxon>Pseudomonadati</taxon>
        <taxon>Campylobacterota</taxon>
        <taxon>Epsilonproteobacteria</taxon>
        <taxon>Campylobacterales</taxon>
        <taxon>Helicobacteraceae</taxon>
        <taxon>Helicobacter</taxon>
    </lineage>
</organism>